<protein>
    <recommendedName>
        <fullName evidence="1">CTP synthase</fullName>
        <ecNumber evidence="1">6.3.4.2</ecNumber>
    </recommendedName>
    <alternativeName>
        <fullName evidence="1">Cytidine 5'-triphosphate synthase</fullName>
    </alternativeName>
    <alternativeName>
        <fullName evidence="1">Cytidine triphosphate synthetase</fullName>
        <shortName evidence="1">CTP synthetase</shortName>
        <shortName evidence="1">CTPS</shortName>
    </alternativeName>
    <alternativeName>
        <fullName evidence="1">UTP--ammonia ligase</fullName>
    </alternativeName>
</protein>
<evidence type="ECO:0000255" key="1">
    <source>
        <dbReference type="HAMAP-Rule" id="MF_01227"/>
    </source>
</evidence>
<feature type="chain" id="PRO_1000139366" description="CTP synthase">
    <location>
        <begin position="1"/>
        <end position="545"/>
    </location>
</feature>
<feature type="domain" description="Glutamine amidotransferase type-1" evidence="1">
    <location>
        <begin position="291"/>
        <end position="542"/>
    </location>
</feature>
<feature type="region of interest" description="Amidoligase domain" evidence="1">
    <location>
        <begin position="1"/>
        <end position="266"/>
    </location>
</feature>
<feature type="active site" description="Nucleophile; for glutamine hydrolysis" evidence="1">
    <location>
        <position position="379"/>
    </location>
</feature>
<feature type="active site" evidence="1">
    <location>
        <position position="515"/>
    </location>
</feature>
<feature type="active site" evidence="1">
    <location>
        <position position="517"/>
    </location>
</feature>
<feature type="binding site" evidence="1">
    <location>
        <position position="14"/>
    </location>
    <ligand>
        <name>CTP</name>
        <dbReference type="ChEBI" id="CHEBI:37563"/>
        <note>allosteric inhibitor</note>
    </ligand>
</feature>
<feature type="binding site" evidence="1">
    <location>
        <position position="14"/>
    </location>
    <ligand>
        <name>UTP</name>
        <dbReference type="ChEBI" id="CHEBI:46398"/>
    </ligand>
</feature>
<feature type="binding site" evidence="1">
    <location>
        <begin position="15"/>
        <end position="20"/>
    </location>
    <ligand>
        <name>ATP</name>
        <dbReference type="ChEBI" id="CHEBI:30616"/>
    </ligand>
</feature>
<feature type="binding site" evidence="1">
    <location>
        <position position="72"/>
    </location>
    <ligand>
        <name>ATP</name>
        <dbReference type="ChEBI" id="CHEBI:30616"/>
    </ligand>
</feature>
<feature type="binding site" evidence="1">
    <location>
        <position position="72"/>
    </location>
    <ligand>
        <name>Mg(2+)</name>
        <dbReference type="ChEBI" id="CHEBI:18420"/>
    </ligand>
</feature>
<feature type="binding site" evidence="1">
    <location>
        <position position="140"/>
    </location>
    <ligand>
        <name>Mg(2+)</name>
        <dbReference type="ChEBI" id="CHEBI:18420"/>
    </ligand>
</feature>
<feature type="binding site" evidence="1">
    <location>
        <begin position="147"/>
        <end position="149"/>
    </location>
    <ligand>
        <name>CTP</name>
        <dbReference type="ChEBI" id="CHEBI:37563"/>
        <note>allosteric inhibitor</note>
    </ligand>
</feature>
<feature type="binding site" evidence="1">
    <location>
        <begin position="187"/>
        <end position="192"/>
    </location>
    <ligand>
        <name>CTP</name>
        <dbReference type="ChEBI" id="CHEBI:37563"/>
        <note>allosteric inhibitor</note>
    </ligand>
</feature>
<feature type="binding site" evidence="1">
    <location>
        <begin position="187"/>
        <end position="192"/>
    </location>
    <ligand>
        <name>UTP</name>
        <dbReference type="ChEBI" id="CHEBI:46398"/>
    </ligand>
</feature>
<feature type="binding site" evidence="1">
    <location>
        <position position="223"/>
    </location>
    <ligand>
        <name>CTP</name>
        <dbReference type="ChEBI" id="CHEBI:37563"/>
        <note>allosteric inhibitor</note>
    </ligand>
</feature>
<feature type="binding site" evidence="1">
    <location>
        <position position="223"/>
    </location>
    <ligand>
        <name>UTP</name>
        <dbReference type="ChEBI" id="CHEBI:46398"/>
    </ligand>
</feature>
<feature type="binding site" evidence="1">
    <location>
        <begin position="239"/>
        <end position="241"/>
    </location>
    <ligand>
        <name>ATP</name>
        <dbReference type="ChEBI" id="CHEBI:30616"/>
    </ligand>
</feature>
<feature type="binding site" evidence="1">
    <location>
        <position position="352"/>
    </location>
    <ligand>
        <name>L-glutamine</name>
        <dbReference type="ChEBI" id="CHEBI:58359"/>
    </ligand>
</feature>
<feature type="binding site" evidence="1">
    <location>
        <begin position="380"/>
        <end position="383"/>
    </location>
    <ligand>
        <name>L-glutamine</name>
        <dbReference type="ChEBI" id="CHEBI:58359"/>
    </ligand>
</feature>
<feature type="binding site" evidence="1">
    <location>
        <position position="403"/>
    </location>
    <ligand>
        <name>L-glutamine</name>
        <dbReference type="ChEBI" id="CHEBI:58359"/>
    </ligand>
</feature>
<feature type="binding site" evidence="1">
    <location>
        <position position="470"/>
    </location>
    <ligand>
        <name>L-glutamine</name>
        <dbReference type="ChEBI" id="CHEBI:58359"/>
    </ligand>
</feature>
<sequence length="545" mass="60070">MATNYIFVTGGVVSSLGKGIAAASLASILEARGLNVTIMKLDPYINVDPGTMSPTQHGEVFVTQDGAETDLDLGHYERFIRSKMSKANNFTSGKIYSEVLRKERRGDYLGATIQVIPHITNEIKERVIEGGKGRDVVIVEVGGTVGDIESLPFLEALRQLAVDVGREKTLFMHLTLVPYIPTAGEVKTKPTQHSVKELLSIGIQPDVLICRSDRAIPSNERKKIALFCNVPERAVISLKDVDSIYRIPELLKSQGLDTFVCDRFRLDCPEADLSEWEQVLYRQANPTGEVTIGMVGKYVELPDAYKSVNEALKHAGLTNRLTVNIKYIDSQDIETKGVELLHGLDAILVPGGFGYRGVEGKIRTAQYARENKIPYLGICLGMQIALIEYARNVAGLTQANSSEFDKDCPQPVVGLITEWQDESGNVETRSDESDLGGTMRLGAQQCHLIEGTKAREVYGAETIVERHRHRYEVNNTLLPQIEAAGLKVSGLSADRKLVEIIEIPNHPWFIAAQFHPEFTSTPRDGHPLFAGFVAAAKAYQDSHKA</sequence>
<accession>A3MYK8</accession>
<proteinExistence type="inferred from homology"/>
<gene>
    <name evidence="1" type="primary">pyrG</name>
    <name type="ordered locus">APL_0136</name>
</gene>
<organism>
    <name type="scientific">Actinobacillus pleuropneumoniae serotype 5b (strain L20)</name>
    <dbReference type="NCBI Taxonomy" id="416269"/>
    <lineage>
        <taxon>Bacteria</taxon>
        <taxon>Pseudomonadati</taxon>
        <taxon>Pseudomonadota</taxon>
        <taxon>Gammaproteobacteria</taxon>
        <taxon>Pasteurellales</taxon>
        <taxon>Pasteurellaceae</taxon>
        <taxon>Actinobacillus</taxon>
    </lineage>
</organism>
<reference key="1">
    <citation type="journal article" date="2008" name="J. Bacteriol.">
        <title>The complete genome sequence of Actinobacillus pleuropneumoniae L20 (serotype 5b).</title>
        <authorList>
            <person name="Foote S.J."/>
            <person name="Bosse J.T."/>
            <person name="Bouevitch A.B."/>
            <person name="Langford P.R."/>
            <person name="Young N.M."/>
            <person name="Nash J.H.E."/>
        </authorList>
    </citation>
    <scope>NUCLEOTIDE SEQUENCE [LARGE SCALE GENOMIC DNA]</scope>
    <source>
        <strain>L20</strain>
    </source>
</reference>
<name>PYRG_ACTP2</name>
<comment type="function">
    <text evidence="1">Catalyzes the ATP-dependent amination of UTP to CTP with either L-glutamine or ammonia as the source of nitrogen. Regulates intracellular CTP levels through interactions with the four ribonucleotide triphosphates.</text>
</comment>
<comment type="catalytic activity">
    <reaction evidence="1">
        <text>UTP + L-glutamine + ATP + H2O = CTP + L-glutamate + ADP + phosphate + 2 H(+)</text>
        <dbReference type="Rhea" id="RHEA:26426"/>
        <dbReference type="ChEBI" id="CHEBI:15377"/>
        <dbReference type="ChEBI" id="CHEBI:15378"/>
        <dbReference type="ChEBI" id="CHEBI:29985"/>
        <dbReference type="ChEBI" id="CHEBI:30616"/>
        <dbReference type="ChEBI" id="CHEBI:37563"/>
        <dbReference type="ChEBI" id="CHEBI:43474"/>
        <dbReference type="ChEBI" id="CHEBI:46398"/>
        <dbReference type="ChEBI" id="CHEBI:58359"/>
        <dbReference type="ChEBI" id="CHEBI:456216"/>
        <dbReference type="EC" id="6.3.4.2"/>
    </reaction>
</comment>
<comment type="catalytic activity">
    <reaction evidence="1">
        <text>L-glutamine + H2O = L-glutamate + NH4(+)</text>
        <dbReference type="Rhea" id="RHEA:15889"/>
        <dbReference type="ChEBI" id="CHEBI:15377"/>
        <dbReference type="ChEBI" id="CHEBI:28938"/>
        <dbReference type="ChEBI" id="CHEBI:29985"/>
        <dbReference type="ChEBI" id="CHEBI:58359"/>
    </reaction>
</comment>
<comment type="catalytic activity">
    <reaction evidence="1">
        <text>UTP + NH4(+) + ATP = CTP + ADP + phosphate + 2 H(+)</text>
        <dbReference type="Rhea" id="RHEA:16597"/>
        <dbReference type="ChEBI" id="CHEBI:15378"/>
        <dbReference type="ChEBI" id="CHEBI:28938"/>
        <dbReference type="ChEBI" id="CHEBI:30616"/>
        <dbReference type="ChEBI" id="CHEBI:37563"/>
        <dbReference type="ChEBI" id="CHEBI:43474"/>
        <dbReference type="ChEBI" id="CHEBI:46398"/>
        <dbReference type="ChEBI" id="CHEBI:456216"/>
    </reaction>
</comment>
<comment type="activity regulation">
    <text evidence="1">Allosterically activated by GTP, when glutamine is the substrate; GTP has no effect on the reaction when ammonia is the substrate. The allosteric effector GTP functions by stabilizing the protein conformation that binds the tetrahedral intermediate(s) formed during glutamine hydrolysis. Inhibited by the product CTP, via allosteric rather than competitive inhibition.</text>
</comment>
<comment type="pathway">
    <text evidence="1">Pyrimidine metabolism; CTP biosynthesis via de novo pathway; CTP from UDP: step 2/2.</text>
</comment>
<comment type="subunit">
    <text evidence="1">Homotetramer.</text>
</comment>
<comment type="miscellaneous">
    <text evidence="1">CTPSs have evolved a hybrid strategy for distinguishing between UTP and CTP. The overlapping regions of the product feedback inhibitory and substrate sites recognize a common feature in both compounds, the triphosphate moiety. To differentiate isosteric substrate and product pyrimidine rings, an additional pocket far from the expected kinase/ligase catalytic site, specifically recognizes the cytosine and ribose portions of the product inhibitor.</text>
</comment>
<comment type="similarity">
    <text evidence="1">Belongs to the CTP synthase family.</text>
</comment>
<keyword id="KW-0067">ATP-binding</keyword>
<keyword id="KW-0315">Glutamine amidotransferase</keyword>
<keyword id="KW-0436">Ligase</keyword>
<keyword id="KW-0460">Magnesium</keyword>
<keyword id="KW-0479">Metal-binding</keyword>
<keyword id="KW-0547">Nucleotide-binding</keyword>
<keyword id="KW-0665">Pyrimidine biosynthesis</keyword>
<keyword id="KW-1185">Reference proteome</keyword>
<dbReference type="EC" id="6.3.4.2" evidence="1"/>
<dbReference type="EMBL" id="CP000569">
    <property type="protein sequence ID" value="ABN73244.1"/>
    <property type="molecule type" value="Genomic_DNA"/>
</dbReference>
<dbReference type="RefSeq" id="WP_005606847.1">
    <property type="nucleotide sequence ID" value="NC_009053.1"/>
</dbReference>
<dbReference type="SMR" id="A3MYK8"/>
<dbReference type="STRING" id="416269.APL_0136"/>
<dbReference type="MEROPS" id="C26.964"/>
<dbReference type="EnsemblBacteria" id="ABN73244">
    <property type="protein sequence ID" value="ABN73244"/>
    <property type="gene ID" value="APL_0136"/>
</dbReference>
<dbReference type="KEGG" id="apl:APL_0136"/>
<dbReference type="eggNOG" id="COG0504">
    <property type="taxonomic scope" value="Bacteria"/>
</dbReference>
<dbReference type="HOGENOM" id="CLU_011675_5_0_6"/>
<dbReference type="UniPathway" id="UPA00159">
    <property type="reaction ID" value="UER00277"/>
</dbReference>
<dbReference type="Proteomes" id="UP000001432">
    <property type="component" value="Chromosome"/>
</dbReference>
<dbReference type="GO" id="GO:0005829">
    <property type="term" value="C:cytosol"/>
    <property type="evidence" value="ECO:0007669"/>
    <property type="project" value="TreeGrafter"/>
</dbReference>
<dbReference type="GO" id="GO:0005524">
    <property type="term" value="F:ATP binding"/>
    <property type="evidence" value="ECO:0007669"/>
    <property type="project" value="UniProtKB-KW"/>
</dbReference>
<dbReference type="GO" id="GO:0003883">
    <property type="term" value="F:CTP synthase activity"/>
    <property type="evidence" value="ECO:0007669"/>
    <property type="project" value="UniProtKB-UniRule"/>
</dbReference>
<dbReference type="GO" id="GO:0004359">
    <property type="term" value="F:glutaminase activity"/>
    <property type="evidence" value="ECO:0007669"/>
    <property type="project" value="RHEA"/>
</dbReference>
<dbReference type="GO" id="GO:0042802">
    <property type="term" value="F:identical protein binding"/>
    <property type="evidence" value="ECO:0007669"/>
    <property type="project" value="TreeGrafter"/>
</dbReference>
<dbReference type="GO" id="GO:0046872">
    <property type="term" value="F:metal ion binding"/>
    <property type="evidence" value="ECO:0007669"/>
    <property type="project" value="UniProtKB-KW"/>
</dbReference>
<dbReference type="GO" id="GO:0044210">
    <property type="term" value="P:'de novo' CTP biosynthetic process"/>
    <property type="evidence" value="ECO:0007669"/>
    <property type="project" value="UniProtKB-UniRule"/>
</dbReference>
<dbReference type="GO" id="GO:0019856">
    <property type="term" value="P:pyrimidine nucleobase biosynthetic process"/>
    <property type="evidence" value="ECO:0007669"/>
    <property type="project" value="TreeGrafter"/>
</dbReference>
<dbReference type="CDD" id="cd03113">
    <property type="entry name" value="CTPS_N"/>
    <property type="match status" value="1"/>
</dbReference>
<dbReference type="CDD" id="cd01746">
    <property type="entry name" value="GATase1_CTP_Synthase"/>
    <property type="match status" value="1"/>
</dbReference>
<dbReference type="FunFam" id="3.40.50.300:FF:000009">
    <property type="entry name" value="CTP synthase"/>
    <property type="match status" value="1"/>
</dbReference>
<dbReference type="FunFam" id="3.40.50.880:FF:000002">
    <property type="entry name" value="CTP synthase"/>
    <property type="match status" value="1"/>
</dbReference>
<dbReference type="Gene3D" id="3.40.50.880">
    <property type="match status" value="1"/>
</dbReference>
<dbReference type="Gene3D" id="3.40.50.300">
    <property type="entry name" value="P-loop containing nucleotide triphosphate hydrolases"/>
    <property type="match status" value="1"/>
</dbReference>
<dbReference type="HAMAP" id="MF_01227">
    <property type="entry name" value="PyrG"/>
    <property type="match status" value="1"/>
</dbReference>
<dbReference type="InterPro" id="IPR029062">
    <property type="entry name" value="Class_I_gatase-like"/>
</dbReference>
<dbReference type="InterPro" id="IPR004468">
    <property type="entry name" value="CTP_synthase"/>
</dbReference>
<dbReference type="InterPro" id="IPR017456">
    <property type="entry name" value="CTP_synthase_N"/>
</dbReference>
<dbReference type="InterPro" id="IPR017926">
    <property type="entry name" value="GATASE"/>
</dbReference>
<dbReference type="InterPro" id="IPR033828">
    <property type="entry name" value="GATase1_CTP_Synthase"/>
</dbReference>
<dbReference type="InterPro" id="IPR027417">
    <property type="entry name" value="P-loop_NTPase"/>
</dbReference>
<dbReference type="NCBIfam" id="NF003792">
    <property type="entry name" value="PRK05380.1"/>
    <property type="match status" value="1"/>
</dbReference>
<dbReference type="NCBIfam" id="TIGR00337">
    <property type="entry name" value="PyrG"/>
    <property type="match status" value="1"/>
</dbReference>
<dbReference type="PANTHER" id="PTHR11550">
    <property type="entry name" value="CTP SYNTHASE"/>
    <property type="match status" value="1"/>
</dbReference>
<dbReference type="PANTHER" id="PTHR11550:SF0">
    <property type="entry name" value="CTP SYNTHASE-RELATED"/>
    <property type="match status" value="1"/>
</dbReference>
<dbReference type="Pfam" id="PF06418">
    <property type="entry name" value="CTP_synth_N"/>
    <property type="match status" value="1"/>
</dbReference>
<dbReference type="Pfam" id="PF00117">
    <property type="entry name" value="GATase"/>
    <property type="match status" value="1"/>
</dbReference>
<dbReference type="SUPFAM" id="SSF52317">
    <property type="entry name" value="Class I glutamine amidotransferase-like"/>
    <property type="match status" value="1"/>
</dbReference>
<dbReference type="SUPFAM" id="SSF52540">
    <property type="entry name" value="P-loop containing nucleoside triphosphate hydrolases"/>
    <property type="match status" value="1"/>
</dbReference>
<dbReference type="PROSITE" id="PS51273">
    <property type="entry name" value="GATASE_TYPE_1"/>
    <property type="match status" value="1"/>
</dbReference>